<dbReference type="EMBL" id="CP001197">
    <property type="protein sequence ID" value="ACL10140.1"/>
    <property type="molecule type" value="Genomic_DNA"/>
</dbReference>
<dbReference type="SMR" id="B8DNJ8"/>
<dbReference type="STRING" id="883.DvMF_3204"/>
<dbReference type="KEGG" id="dvm:DvMF_3204"/>
<dbReference type="eggNOG" id="COG0632">
    <property type="taxonomic scope" value="Bacteria"/>
</dbReference>
<dbReference type="HOGENOM" id="CLU_087936_0_0_7"/>
<dbReference type="OrthoDB" id="5293449at2"/>
<dbReference type="GO" id="GO:0005737">
    <property type="term" value="C:cytoplasm"/>
    <property type="evidence" value="ECO:0007669"/>
    <property type="project" value="UniProtKB-SubCell"/>
</dbReference>
<dbReference type="GO" id="GO:0009379">
    <property type="term" value="C:Holliday junction helicase complex"/>
    <property type="evidence" value="ECO:0007669"/>
    <property type="project" value="InterPro"/>
</dbReference>
<dbReference type="GO" id="GO:0048476">
    <property type="term" value="C:Holliday junction resolvase complex"/>
    <property type="evidence" value="ECO:0007669"/>
    <property type="project" value="UniProtKB-UniRule"/>
</dbReference>
<dbReference type="GO" id="GO:0005524">
    <property type="term" value="F:ATP binding"/>
    <property type="evidence" value="ECO:0007669"/>
    <property type="project" value="InterPro"/>
</dbReference>
<dbReference type="GO" id="GO:0000400">
    <property type="term" value="F:four-way junction DNA binding"/>
    <property type="evidence" value="ECO:0007669"/>
    <property type="project" value="UniProtKB-UniRule"/>
</dbReference>
<dbReference type="GO" id="GO:0009378">
    <property type="term" value="F:four-way junction helicase activity"/>
    <property type="evidence" value="ECO:0007669"/>
    <property type="project" value="InterPro"/>
</dbReference>
<dbReference type="GO" id="GO:0006310">
    <property type="term" value="P:DNA recombination"/>
    <property type="evidence" value="ECO:0007669"/>
    <property type="project" value="UniProtKB-UniRule"/>
</dbReference>
<dbReference type="GO" id="GO:0006281">
    <property type="term" value="P:DNA repair"/>
    <property type="evidence" value="ECO:0007669"/>
    <property type="project" value="UniProtKB-UniRule"/>
</dbReference>
<dbReference type="CDD" id="cd14332">
    <property type="entry name" value="UBA_RuvA_C"/>
    <property type="match status" value="1"/>
</dbReference>
<dbReference type="Gene3D" id="1.10.150.20">
    <property type="entry name" value="5' to 3' exonuclease, C-terminal subdomain"/>
    <property type="match status" value="1"/>
</dbReference>
<dbReference type="Gene3D" id="1.10.8.10">
    <property type="entry name" value="DNA helicase RuvA subunit, C-terminal domain"/>
    <property type="match status" value="1"/>
</dbReference>
<dbReference type="Gene3D" id="2.40.50.140">
    <property type="entry name" value="Nucleic acid-binding proteins"/>
    <property type="match status" value="1"/>
</dbReference>
<dbReference type="HAMAP" id="MF_00031">
    <property type="entry name" value="DNA_HJ_migration_RuvA"/>
    <property type="match status" value="1"/>
</dbReference>
<dbReference type="InterPro" id="IPR013849">
    <property type="entry name" value="DNA_helicase_Holl-junc_RuvA_I"/>
</dbReference>
<dbReference type="InterPro" id="IPR012340">
    <property type="entry name" value="NA-bd_OB-fold"/>
</dbReference>
<dbReference type="InterPro" id="IPR000085">
    <property type="entry name" value="RuvA"/>
</dbReference>
<dbReference type="InterPro" id="IPR010994">
    <property type="entry name" value="RuvA_2-like"/>
</dbReference>
<dbReference type="InterPro" id="IPR011114">
    <property type="entry name" value="RuvA_C"/>
</dbReference>
<dbReference type="InterPro" id="IPR036267">
    <property type="entry name" value="RuvA_C_sf"/>
</dbReference>
<dbReference type="NCBIfam" id="TIGR00084">
    <property type="entry name" value="ruvA"/>
    <property type="match status" value="1"/>
</dbReference>
<dbReference type="Pfam" id="PF14520">
    <property type="entry name" value="HHH_5"/>
    <property type="match status" value="1"/>
</dbReference>
<dbReference type="Pfam" id="PF07499">
    <property type="entry name" value="RuvA_C"/>
    <property type="match status" value="1"/>
</dbReference>
<dbReference type="Pfam" id="PF01330">
    <property type="entry name" value="RuvA_N"/>
    <property type="match status" value="1"/>
</dbReference>
<dbReference type="SUPFAM" id="SSF46929">
    <property type="entry name" value="DNA helicase RuvA subunit, C-terminal domain"/>
    <property type="match status" value="1"/>
</dbReference>
<dbReference type="SUPFAM" id="SSF50249">
    <property type="entry name" value="Nucleic acid-binding proteins"/>
    <property type="match status" value="1"/>
</dbReference>
<dbReference type="SUPFAM" id="SSF47781">
    <property type="entry name" value="RuvA domain 2-like"/>
    <property type="match status" value="1"/>
</dbReference>
<reference key="1">
    <citation type="submission" date="2008-10" db="EMBL/GenBank/DDBJ databases">
        <title>Complete sequence of Desulfovibrio vulgaris str. 'Miyazaki F'.</title>
        <authorList>
            <person name="Lucas S."/>
            <person name="Copeland A."/>
            <person name="Lapidus A."/>
            <person name="Glavina del Rio T."/>
            <person name="Dalin E."/>
            <person name="Tice H."/>
            <person name="Bruce D."/>
            <person name="Goodwin L."/>
            <person name="Pitluck S."/>
            <person name="Sims D."/>
            <person name="Brettin T."/>
            <person name="Detter J.C."/>
            <person name="Han C."/>
            <person name="Larimer F."/>
            <person name="Land M."/>
            <person name="Hauser L."/>
            <person name="Kyrpides N."/>
            <person name="Mikhailova N."/>
            <person name="Hazen T.C."/>
            <person name="Richardson P."/>
        </authorList>
    </citation>
    <scope>NUCLEOTIDE SEQUENCE [LARGE SCALE GENOMIC DNA]</scope>
    <source>
        <strain>DSM 19637 / Miyazaki F</strain>
    </source>
</reference>
<gene>
    <name evidence="1" type="primary">ruvA</name>
    <name type="ordered locus">DvMF_3204</name>
</gene>
<keyword id="KW-0963">Cytoplasm</keyword>
<keyword id="KW-0227">DNA damage</keyword>
<keyword id="KW-0233">DNA recombination</keyword>
<keyword id="KW-0234">DNA repair</keyword>
<keyword id="KW-0238">DNA-binding</keyword>
<feature type="chain" id="PRO_1000195136" description="Holliday junction branch migration complex subunit RuvA">
    <location>
        <begin position="1"/>
        <end position="202"/>
    </location>
</feature>
<feature type="region of interest" description="Domain I" evidence="1">
    <location>
        <begin position="1"/>
        <end position="65"/>
    </location>
</feature>
<feature type="region of interest" description="Domain II" evidence="1">
    <location>
        <begin position="66"/>
        <end position="144"/>
    </location>
</feature>
<feature type="region of interest" description="Flexible linker" evidence="1">
    <location>
        <begin position="145"/>
        <end position="155"/>
    </location>
</feature>
<feature type="region of interest" description="Domain III" evidence="1">
    <location>
        <begin position="155"/>
        <end position="202"/>
    </location>
</feature>
<proteinExistence type="inferred from homology"/>
<name>RUVA_NITV9</name>
<accession>B8DNJ8</accession>
<evidence type="ECO:0000255" key="1">
    <source>
        <dbReference type="HAMAP-Rule" id="MF_00031"/>
    </source>
</evidence>
<sequence length="202" mass="21658">MIAYVEGRVAEISGNACVVVTEGGVGYEVHLPAHTLSRLPERGGQVAFHVRTEVREDALELFGFSTWDERQTFMVLTTISKVGARTALAILSQFRPDDLRRLVVEDDVLALTRVSGIGKKTAQHIFLELKYKLKVEDLPAGLVLAGGAAPGGVFRDALAGLGNLGYLEDEAAPVLKEVLKAEPDLDVAGALRAALKALARGR</sequence>
<comment type="function">
    <text evidence="1">The RuvA-RuvB-RuvC complex processes Holliday junction (HJ) DNA during genetic recombination and DNA repair, while the RuvA-RuvB complex plays an important role in the rescue of blocked DNA replication forks via replication fork reversal (RFR). RuvA specifically binds to HJ cruciform DNA, conferring on it an open structure. The RuvB hexamer acts as an ATP-dependent pump, pulling dsDNA into and through the RuvAB complex. HJ branch migration allows RuvC to scan DNA until it finds its consensus sequence, where it cleaves and resolves the cruciform DNA.</text>
</comment>
<comment type="subunit">
    <text evidence="1">Homotetramer. Forms an RuvA(8)-RuvB(12)-Holliday junction (HJ) complex. HJ DNA is sandwiched between 2 RuvA tetramers; dsDNA enters through RuvA and exits via RuvB. An RuvB hexamer assembles on each DNA strand where it exits the tetramer. Each RuvB hexamer is contacted by two RuvA subunits (via domain III) on 2 adjacent RuvB subunits; this complex drives branch migration. In the full resolvosome a probable DNA-RuvA(4)-RuvB(12)-RuvC(2) complex forms which resolves the HJ.</text>
</comment>
<comment type="subcellular location">
    <subcellularLocation>
        <location evidence="1">Cytoplasm</location>
    </subcellularLocation>
</comment>
<comment type="domain">
    <text evidence="1">Has three domains with a flexible linker between the domains II and III and assumes an 'L' shape. Domain III is highly mobile and contacts RuvB.</text>
</comment>
<comment type="similarity">
    <text evidence="1">Belongs to the RuvA family.</text>
</comment>
<protein>
    <recommendedName>
        <fullName evidence="1">Holliday junction branch migration complex subunit RuvA</fullName>
    </recommendedName>
</protein>
<organism>
    <name type="scientific">Nitratidesulfovibrio vulgaris (strain DSM 19637 / Miyazaki F)</name>
    <name type="common">Desulfovibrio vulgaris</name>
    <dbReference type="NCBI Taxonomy" id="883"/>
    <lineage>
        <taxon>Bacteria</taxon>
        <taxon>Pseudomonadati</taxon>
        <taxon>Thermodesulfobacteriota</taxon>
        <taxon>Desulfovibrionia</taxon>
        <taxon>Desulfovibrionales</taxon>
        <taxon>Desulfovibrionaceae</taxon>
        <taxon>Nitratidesulfovibrio</taxon>
    </lineage>
</organism>